<protein>
    <recommendedName>
        <fullName evidence="1">Large ribosomal subunit protein bL12</fullName>
    </recommendedName>
    <alternativeName>
        <fullName evidence="2">50S ribosomal protein L7/L12</fullName>
    </alternativeName>
</protein>
<feature type="chain" id="PRO_0000243381" description="Large ribosomal subunit protein bL12">
    <location>
        <begin position="1"/>
        <end position="119"/>
    </location>
</feature>
<sequence length="119" mass="12517">MTKEQIIEAVKSMTVLELNDLVKAIEEEFGVTAAAPVAVAGGAGEAAAEKTEFDVELTSAGAQKIKVIKVVREITGLGLKEAKELVDNTPKVIKEAAAKEEAEEIKAKLEEVGAAVEVK</sequence>
<proteinExistence type="inferred from homology"/>
<comment type="function">
    <text evidence="1">Forms part of the ribosomal stalk which helps the ribosome interact with GTP-bound translation factors. Is thus essential for accurate translation.</text>
</comment>
<comment type="subunit">
    <text evidence="1">Homodimer. Part of the ribosomal stalk of the 50S ribosomal subunit. Forms a multimeric L10(L12)X complex, where L10 forms an elongated spine to which 2 to 4 L12 dimers bind in a sequential fashion. Binds GTP-bound translation factors.</text>
</comment>
<comment type="similarity">
    <text evidence="1">Belongs to the bacterial ribosomal protein bL12 family.</text>
</comment>
<evidence type="ECO:0000255" key="1">
    <source>
        <dbReference type="HAMAP-Rule" id="MF_00368"/>
    </source>
</evidence>
<evidence type="ECO:0000305" key="2"/>
<gene>
    <name evidence="1" type="primary">rplL</name>
    <name type="ordered locus">BCE33L0094</name>
</gene>
<dbReference type="EMBL" id="CP000001">
    <property type="protein sequence ID" value="AAU20138.1"/>
    <property type="molecule type" value="Genomic_DNA"/>
</dbReference>
<dbReference type="RefSeq" id="WP_000159736.1">
    <property type="nucleotide sequence ID" value="NZ_CP009968.1"/>
</dbReference>
<dbReference type="SMR" id="Q63HA0"/>
<dbReference type="GeneID" id="93010953"/>
<dbReference type="KEGG" id="bcz:BCE33L0094"/>
<dbReference type="PATRIC" id="fig|288681.22.peg.57"/>
<dbReference type="Proteomes" id="UP000002612">
    <property type="component" value="Chromosome"/>
</dbReference>
<dbReference type="GO" id="GO:0022625">
    <property type="term" value="C:cytosolic large ribosomal subunit"/>
    <property type="evidence" value="ECO:0007669"/>
    <property type="project" value="TreeGrafter"/>
</dbReference>
<dbReference type="GO" id="GO:0003729">
    <property type="term" value="F:mRNA binding"/>
    <property type="evidence" value="ECO:0007669"/>
    <property type="project" value="TreeGrafter"/>
</dbReference>
<dbReference type="GO" id="GO:0003735">
    <property type="term" value="F:structural constituent of ribosome"/>
    <property type="evidence" value="ECO:0007669"/>
    <property type="project" value="InterPro"/>
</dbReference>
<dbReference type="GO" id="GO:0006412">
    <property type="term" value="P:translation"/>
    <property type="evidence" value="ECO:0007669"/>
    <property type="project" value="UniProtKB-UniRule"/>
</dbReference>
<dbReference type="CDD" id="cd00387">
    <property type="entry name" value="Ribosomal_L7_L12"/>
    <property type="match status" value="1"/>
</dbReference>
<dbReference type="FunFam" id="1.20.5.710:FF:000002">
    <property type="entry name" value="50S ribosomal protein L7/L12"/>
    <property type="match status" value="1"/>
</dbReference>
<dbReference type="FunFam" id="3.30.1390.10:FF:000001">
    <property type="entry name" value="50S ribosomal protein L7/L12"/>
    <property type="match status" value="1"/>
</dbReference>
<dbReference type="Gene3D" id="3.30.1390.10">
    <property type="match status" value="1"/>
</dbReference>
<dbReference type="Gene3D" id="1.20.5.710">
    <property type="entry name" value="Single helix bin"/>
    <property type="match status" value="1"/>
</dbReference>
<dbReference type="HAMAP" id="MF_00368">
    <property type="entry name" value="Ribosomal_bL12"/>
    <property type="match status" value="1"/>
</dbReference>
<dbReference type="InterPro" id="IPR000206">
    <property type="entry name" value="Ribosomal_bL12"/>
</dbReference>
<dbReference type="InterPro" id="IPR013823">
    <property type="entry name" value="Ribosomal_bL12_C"/>
</dbReference>
<dbReference type="InterPro" id="IPR014719">
    <property type="entry name" value="Ribosomal_bL12_C/ClpS-like"/>
</dbReference>
<dbReference type="InterPro" id="IPR008932">
    <property type="entry name" value="Ribosomal_bL12_oligo"/>
</dbReference>
<dbReference type="InterPro" id="IPR036235">
    <property type="entry name" value="Ribosomal_bL12_oligo_N_sf"/>
</dbReference>
<dbReference type="NCBIfam" id="TIGR00855">
    <property type="entry name" value="L12"/>
    <property type="match status" value="1"/>
</dbReference>
<dbReference type="PANTHER" id="PTHR45987">
    <property type="entry name" value="39S RIBOSOMAL PROTEIN L12"/>
    <property type="match status" value="1"/>
</dbReference>
<dbReference type="PANTHER" id="PTHR45987:SF4">
    <property type="entry name" value="LARGE RIBOSOMAL SUBUNIT PROTEIN BL12M"/>
    <property type="match status" value="1"/>
</dbReference>
<dbReference type="Pfam" id="PF00542">
    <property type="entry name" value="Ribosomal_L12"/>
    <property type="match status" value="1"/>
</dbReference>
<dbReference type="Pfam" id="PF16320">
    <property type="entry name" value="Ribosomal_L12_N"/>
    <property type="match status" value="1"/>
</dbReference>
<dbReference type="SUPFAM" id="SSF54736">
    <property type="entry name" value="ClpS-like"/>
    <property type="match status" value="1"/>
</dbReference>
<dbReference type="SUPFAM" id="SSF48300">
    <property type="entry name" value="Ribosomal protein L7/12, oligomerisation (N-terminal) domain"/>
    <property type="match status" value="1"/>
</dbReference>
<name>RL7_BACCZ</name>
<accession>Q63HA0</accession>
<organism>
    <name type="scientific">Bacillus cereus (strain ZK / E33L)</name>
    <dbReference type="NCBI Taxonomy" id="288681"/>
    <lineage>
        <taxon>Bacteria</taxon>
        <taxon>Bacillati</taxon>
        <taxon>Bacillota</taxon>
        <taxon>Bacilli</taxon>
        <taxon>Bacillales</taxon>
        <taxon>Bacillaceae</taxon>
        <taxon>Bacillus</taxon>
        <taxon>Bacillus cereus group</taxon>
    </lineage>
</organism>
<keyword id="KW-0687">Ribonucleoprotein</keyword>
<keyword id="KW-0689">Ribosomal protein</keyword>
<reference key="1">
    <citation type="journal article" date="2006" name="J. Bacteriol.">
        <title>Pathogenomic sequence analysis of Bacillus cereus and Bacillus thuringiensis isolates closely related to Bacillus anthracis.</title>
        <authorList>
            <person name="Han C.S."/>
            <person name="Xie G."/>
            <person name="Challacombe J.F."/>
            <person name="Altherr M.R."/>
            <person name="Bhotika S.S."/>
            <person name="Bruce D."/>
            <person name="Campbell C.S."/>
            <person name="Campbell M.L."/>
            <person name="Chen J."/>
            <person name="Chertkov O."/>
            <person name="Cleland C."/>
            <person name="Dimitrijevic M."/>
            <person name="Doggett N.A."/>
            <person name="Fawcett J.J."/>
            <person name="Glavina T."/>
            <person name="Goodwin L.A."/>
            <person name="Hill K.K."/>
            <person name="Hitchcock P."/>
            <person name="Jackson P.J."/>
            <person name="Keim P."/>
            <person name="Kewalramani A.R."/>
            <person name="Longmire J."/>
            <person name="Lucas S."/>
            <person name="Malfatti S."/>
            <person name="McMurry K."/>
            <person name="Meincke L.J."/>
            <person name="Misra M."/>
            <person name="Moseman B.L."/>
            <person name="Mundt M."/>
            <person name="Munk A.C."/>
            <person name="Okinaka R.T."/>
            <person name="Parson-Quintana B."/>
            <person name="Reilly L.P."/>
            <person name="Richardson P."/>
            <person name="Robinson D.L."/>
            <person name="Rubin E."/>
            <person name="Saunders E."/>
            <person name="Tapia R."/>
            <person name="Tesmer J.G."/>
            <person name="Thayer N."/>
            <person name="Thompson L.S."/>
            <person name="Tice H."/>
            <person name="Ticknor L.O."/>
            <person name="Wills P.L."/>
            <person name="Brettin T.S."/>
            <person name="Gilna P."/>
        </authorList>
    </citation>
    <scope>NUCLEOTIDE SEQUENCE [LARGE SCALE GENOMIC DNA]</scope>
    <source>
        <strain>ZK / E33L</strain>
    </source>
</reference>